<comment type="function">
    <text evidence="1">NDH-1 shuttles electrons from NADH, via FMN and iron-sulfur (Fe-S) centers, to quinones in the respiratory chain. Couples the redox reaction to proton translocation (for every two electrons transferred, four hydrogen ions are translocated across the cytoplasmic membrane), and thus conserves the redox energy in a proton gradient (By similarity).</text>
</comment>
<comment type="catalytic activity">
    <reaction evidence="2">
        <text>a quinone + NADH + 5 H(+)(in) = a quinol + NAD(+) + 4 H(+)(out)</text>
        <dbReference type="Rhea" id="RHEA:57888"/>
        <dbReference type="ChEBI" id="CHEBI:15378"/>
        <dbReference type="ChEBI" id="CHEBI:24646"/>
        <dbReference type="ChEBI" id="CHEBI:57540"/>
        <dbReference type="ChEBI" id="CHEBI:57945"/>
        <dbReference type="ChEBI" id="CHEBI:132124"/>
    </reaction>
</comment>
<comment type="cofactor">
    <cofactor evidence="2">
        <name>[4Fe-4S] cluster</name>
        <dbReference type="ChEBI" id="CHEBI:49883"/>
    </cofactor>
    <text evidence="2">Binds 1 [4Fe-4S] cluster.</text>
</comment>
<comment type="subunit">
    <text evidence="2">NDH-1 is composed of 14 different subunits. Subunits NuoB, C, D, E, F, and G constitute the peripheral sector of the complex.</text>
</comment>
<comment type="subcellular location">
    <subcellularLocation>
        <location evidence="2">Cell inner membrane</location>
        <topology evidence="2">Peripheral membrane protein</topology>
        <orientation evidence="2">Cytoplasmic side</orientation>
    </subcellularLocation>
</comment>
<comment type="similarity">
    <text evidence="2">Belongs to the complex I 20 kDa subunit family.</text>
</comment>
<dbReference type="EC" id="7.1.1.-" evidence="2"/>
<dbReference type="EMBL" id="CP000267">
    <property type="protein sequence ID" value="ABD69227.1"/>
    <property type="molecule type" value="Genomic_DNA"/>
</dbReference>
<dbReference type="RefSeq" id="WP_011463795.1">
    <property type="nucleotide sequence ID" value="NC_007908.1"/>
</dbReference>
<dbReference type="SMR" id="Q21YC6"/>
<dbReference type="STRING" id="338969.Rfer_1494"/>
<dbReference type="KEGG" id="rfr:Rfer_1494"/>
<dbReference type="eggNOG" id="COG0377">
    <property type="taxonomic scope" value="Bacteria"/>
</dbReference>
<dbReference type="HOGENOM" id="CLU_055737_7_3_4"/>
<dbReference type="OrthoDB" id="9786737at2"/>
<dbReference type="Proteomes" id="UP000008332">
    <property type="component" value="Chromosome"/>
</dbReference>
<dbReference type="GO" id="GO:0005886">
    <property type="term" value="C:plasma membrane"/>
    <property type="evidence" value="ECO:0007669"/>
    <property type="project" value="UniProtKB-SubCell"/>
</dbReference>
<dbReference type="GO" id="GO:0045271">
    <property type="term" value="C:respiratory chain complex I"/>
    <property type="evidence" value="ECO:0007669"/>
    <property type="project" value="TreeGrafter"/>
</dbReference>
<dbReference type="GO" id="GO:0051539">
    <property type="term" value="F:4 iron, 4 sulfur cluster binding"/>
    <property type="evidence" value="ECO:0007669"/>
    <property type="project" value="UniProtKB-KW"/>
</dbReference>
<dbReference type="GO" id="GO:0005506">
    <property type="term" value="F:iron ion binding"/>
    <property type="evidence" value="ECO:0007669"/>
    <property type="project" value="UniProtKB-UniRule"/>
</dbReference>
<dbReference type="GO" id="GO:0008137">
    <property type="term" value="F:NADH dehydrogenase (ubiquinone) activity"/>
    <property type="evidence" value="ECO:0007669"/>
    <property type="project" value="InterPro"/>
</dbReference>
<dbReference type="GO" id="GO:0050136">
    <property type="term" value="F:NADH:ubiquinone reductase (non-electrogenic) activity"/>
    <property type="evidence" value="ECO:0007669"/>
    <property type="project" value="UniProtKB-UniRule"/>
</dbReference>
<dbReference type="GO" id="GO:0048038">
    <property type="term" value="F:quinone binding"/>
    <property type="evidence" value="ECO:0007669"/>
    <property type="project" value="UniProtKB-KW"/>
</dbReference>
<dbReference type="GO" id="GO:0009060">
    <property type="term" value="P:aerobic respiration"/>
    <property type="evidence" value="ECO:0007669"/>
    <property type="project" value="TreeGrafter"/>
</dbReference>
<dbReference type="GO" id="GO:0015990">
    <property type="term" value="P:electron transport coupled proton transport"/>
    <property type="evidence" value="ECO:0007669"/>
    <property type="project" value="TreeGrafter"/>
</dbReference>
<dbReference type="FunFam" id="3.40.50.12280:FF:000001">
    <property type="entry name" value="NADH-quinone oxidoreductase subunit B 2"/>
    <property type="match status" value="1"/>
</dbReference>
<dbReference type="Gene3D" id="3.40.50.12280">
    <property type="match status" value="1"/>
</dbReference>
<dbReference type="HAMAP" id="MF_01356">
    <property type="entry name" value="NDH1_NuoB"/>
    <property type="match status" value="1"/>
</dbReference>
<dbReference type="InterPro" id="IPR006137">
    <property type="entry name" value="NADH_UbQ_OxRdtase-like_20kDa"/>
</dbReference>
<dbReference type="InterPro" id="IPR006138">
    <property type="entry name" value="NADH_UQ_OxRdtase_20Kd_su"/>
</dbReference>
<dbReference type="NCBIfam" id="TIGR01957">
    <property type="entry name" value="nuoB_fam"/>
    <property type="match status" value="1"/>
</dbReference>
<dbReference type="NCBIfam" id="NF005012">
    <property type="entry name" value="PRK06411.1"/>
    <property type="match status" value="1"/>
</dbReference>
<dbReference type="PANTHER" id="PTHR11995">
    <property type="entry name" value="NADH DEHYDROGENASE"/>
    <property type="match status" value="1"/>
</dbReference>
<dbReference type="PANTHER" id="PTHR11995:SF14">
    <property type="entry name" value="NADH DEHYDROGENASE [UBIQUINONE] IRON-SULFUR PROTEIN 7, MITOCHONDRIAL"/>
    <property type="match status" value="1"/>
</dbReference>
<dbReference type="Pfam" id="PF01058">
    <property type="entry name" value="Oxidored_q6"/>
    <property type="match status" value="1"/>
</dbReference>
<dbReference type="SUPFAM" id="SSF56770">
    <property type="entry name" value="HydA/Nqo6-like"/>
    <property type="match status" value="1"/>
</dbReference>
<dbReference type="PROSITE" id="PS01150">
    <property type="entry name" value="COMPLEX1_20K"/>
    <property type="match status" value="1"/>
</dbReference>
<proteinExistence type="inferred from homology"/>
<sequence>MIEGILKEGFITTSYDSVMNWAKTGSLWPMSFGLACCAVEMMHAANARYDISRFGAEVFRASPRQSDLIIVAGTLCNKMAPAFRKVYDQMSEPRRVISMGSCANGGGYYHYSYSVVRGCDRIVPVDVYVPGCPPTAEALLYGIIQLQHKIRRTQTIARA</sequence>
<reference key="1">
    <citation type="submission" date="2006-02" db="EMBL/GenBank/DDBJ databases">
        <title>Complete sequence of chromosome of Rhodoferax ferrireducens DSM 15236.</title>
        <authorList>
            <person name="Copeland A."/>
            <person name="Lucas S."/>
            <person name="Lapidus A."/>
            <person name="Barry K."/>
            <person name="Detter J.C."/>
            <person name="Glavina del Rio T."/>
            <person name="Hammon N."/>
            <person name="Israni S."/>
            <person name="Pitluck S."/>
            <person name="Brettin T."/>
            <person name="Bruce D."/>
            <person name="Han C."/>
            <person name="Tapia R."/>
            <person name="Gilna P."/>
            <person name="Kiss H."/>
            <person name="Schmutz J."/>
            <person name="Larimer F."/>
            <person name="Land M."/>
            <person name="Kyrpides N."/>
            <person name="Ivanova N."/>
            <person name="Richardson P."/>
        </authorList>
    </citation>
    <scope>NUCLEOTIDE SEQUENCE [LARGE SCALE GENOMIC DNA]</scope>
    <source>
        <strain>ATCC BAA-621 / DSM 15236 / T118</strain>
    </source>
</reference>
<feature type="chain" id="PRO_0000358469" description="NADH-quinone oxidoreductase subunit B">
    <location>
        <begin position="1"/>
        <end position="159"/>
    </location>
</feature>
<feature type="binding site" evidence="2">
    <location>
        <position position="36"/>
    </location>
    <ligand>
        <name>[4Fe-4S] cluster</name>
        <dbReference type="ChEBI" id="CHEBI:49883"/>
    </ligand>
</feature>
<feature type="binding site" evidence="2">
    <location>
        <position position="37"/>
    </location>
    <ligand>
        <name>[4Fe-4S] cluster</name>
        <dbReference type="ChEBI" id="CHEBI:49883"/>
    </ligand>
</feature>
<feature type="binding site" evidence="2">
    <location>
        <position position="102"/>
    </location>
    <ligand>
        <name>[4Fe-4S] cluster</name>
        <dbReference type="ChEBI" id="CHEBI:49883"/>
    </ligand>
</feature>
<feature type="binding site" evidence="2">
    <location>
        <position position="132"/>
    </location>
    <ligand>
        <name>[4Fe-4S] cluster</name>
        <dbReference type="ChEBI" id="CHEBI:49883"/>
    </ligand>
</feature>
<accession>Q21YC6</accession>
<name>NUOB_ALBFT</name>
<organism>
    <name type="scientific">Albidiferax ferrireducens (strain ATCC BAA-621 / DSM 15236 / T118)</name>
    <name type="common">Rhodoferax ferrireducens</name>
    <dbReference type="NCBI Taxonomy" id="338969"/>
    <lineage>
        <taxon>Bacteria</taxon>
        <taxon>Pseudomonadati</taxon>
        <taxon>Pseudomonadota</taxon>
        <taxon>Betaproteobacteria</taxon>
        <taxon>Burkholderiales</taxon>
        <taxon>Comamonadaceae</taxon>
        <taxon>Rhodoferax</taxon>
    </lineage>
</organism>
<keyword id="KW-0004">4Fe-4S</keyword>
<keyword id="KW-0997">Cell inner membrane</keyword>
<keyword id="KW-1003">Cell membrane</keyword>
<keyword id="KW-0408">Iron</keyword>
<keyword id="KW-0411">Iron-sulfur</keyword>
<keyword id="KW-0472">Membrane</keyword>
<keyword id="KW-0479">Metal-binding</keyword>
<keyword id="KW-0520">NAD</keyword>
<keyword id="KW-0874">Quinone</keyword>
<keyword id="KW-1185">Reference proteome</keyword>
<keyword id="KW-1278">Translocase</keyword>
<keyword id="KW-0813">Transport</keyword>
<keyword id="KW-0830">Ubiquinone</keyword>
<gene>
    <name evidence="2" type="primary">nuoB</name>
    <name type="ordered locus">Rfer_1494</name>
</gene>
<protein>
    <recommendedName>
        <fullName evidence="2">NADH-quinone oxidoreductase subunit B</fullName>
        <ecNumber evidence="2">7.1.1.-</ecNumber>
    </recommendedName>
    <alternativeName>
        <fullName evidence="2">NADH dehydrogenase I subunit B</fullName>
    </alternativeName>
    <alternativeName>
        <fullName evidence="2">NDH-1 subunit B</fullName>
    </alternativeName>
</protein>
<evidence type="ECO:0000250" key="1"/>
<evidence type="ECO:0000255" key="2">
    <source>
        <dbReference type="HAMAP-Rule" id="MF_01356"/>
    </source>
</evidence>